<gene>
    <name type="ordered locus">Rv0986</name>
    <name type="ORF">MTV044.14</name>
</gene>
<comment type="function">
    <text evidence="3">Probably part of an ABC transporter complex involved in host cell binding either through secretion of an adherence factor or through maintaining the architecture and integrity of the mycobacterial cell envelope.</text>
</comment>
<comment type="subunit">
    <text evidence="4">The complex is probably composed of two ATP-binding proteins (Rv0986) and two transmembrane proteins (Rv0987).</text>
</comment>
<comment type="induction">
    <text evidence="2">Highly up-regulated during the early stages of invasion of the human blood-brain barrier.</text>
</comment>
<comment type="disruption phenotype">
    <text evidence="3">Disruption of the gene reduces the ability of M.tuberculosis to bind to host cells. Disruption does not reduce virulence in a mouse model of infection.</text>
</comment>
<comment type="similarity">
    <text evidence="4">Belongs to the ABC transporter superfamily.</text>
</comment>
<accession>P9WQK1</accession>
<accession>L0T5H7</accession>
<accession>O53899</accession>
<feature type="chain" id="PRO_0000093254" description="Uncharacterized ABC transporter ATP-binding protein Rv0986">
    <location>
        <begin position="1"/>
        <end position="248"/>
    </location>
</feature>
<feature type="domain" description="ABC transporter" evidence="1">
    <location>
        <begin position="7"/>
        <end position="246"/>
    </location>
</feature>
<feature type="binding site" evidence="1">
    <location>
        <begin position="43"/>
        <end position="50"/>
    </location>
    <ligand>
        <name>ATP</name>
        <dbReference type="ChEBI" id="CHEBI:30616"/>
    </ligand>
</feature>
<sequence length="248" mass="27373">MNRQPIVQLSNLSWTFREGETRRQVLDHITFDFEPGEFVALLGQSGSGKSTLLNLISGIEKPTTGDVTINGFAITQKTERDRTLFRRDQIGIVFQFFNLIPTLTVLENITLPQELAGVSQRKAAVVARDLLEKVGMADRERTFPDKLSGGEQQRVAISRALAHNPMLVLADEPTGNLDSDTGDKVLDVLLDLTRQAGKTLIMATHSPSMTQHADRVVNLQGGRLIPAVNRENQTDQPASTILLPTSYE</sequence>
<dbReference type="EMBL" id="AL123456">
    <property type="protein sequence ID" value="CCP43736.1"/>
    <property type="molecule type" value="Genomic_DNA"/>
</dbReference>
<dbReference type="PIR" id="F70821">
    <property type="entry name" value="F70821"/>
</dbReference>
<dbReference type="RefSeq" id="NP_215501.1">
    <property type="nucleotide sequence ID" value="NC_000962.3"/>
</dbReference>
<dbReference type="RefSeq" id="WP_003900248.1">
    <property type="nucleotide sequence ID" value="NZ_NVQJ01000018.1"/>
</dbReference>
<dbReference type="SMR" id="P9WQK1"/>
<dbReference type="FunCoup" id="P9WQK1">
    <property type="interactions" value="80"/>
</dbReference>
<dbReference type="STRING" id="83332.Rv0986"/>
<dbReference type="PaxDb" id="83332-Rv0986"/>
<dbReference type="DNASU" id="885364"/>
<dbReference type="GeneID" id="885364"/>
<dbReference type="KEGG" id="mtu:Rv0986"/>
<dbReference type="KEGG" id="mtv:RVBD_0986"/>
<dbReference type="TubercuList" id="Rv0986"/>
<dbReference type="eggNOG" id="COG1136">
    <property type="taxonomic scope" value="Bacteria"/>
</dbReference>
<dbReference type="InParanoid" id="P9WQK1"/>
<dbReference type="OrthoDB" id="9802264at2"/>
<dbReference type="PhylomeDB" id="P9WQK1"/>
<dbReference type="Proteomes" id="UP000001584">
    <property type="component" value="Chromosome"/>
</dbReference>
<dbReference type="GO" id="GO:0005886">
    <property type="term" value="C:plasma membrane"/>
    <property type="evidence" value="ECO:0000318"/>
    <property type="project" value="GO_Central"/>
</dbReference>
<dbReference type="GO" id="GO:0005524">
    <property type="term" value="F:ATP binding"/>
    <property type="evidence" value="ECO:0007669"/>
    <property type="project" value="UniProtKB-KW"/>
</dbReference>
<dbReference type="GO" id="GO:0016887">
    <property type="term" value="F:ATP hydrolysis activity"/>
    <property type="evidence" value="ECO:0007669"/>
    <property type="project" value="InterPro"/>
</dbReference>
<dbReference type="GO" id="GO:0022857">
    <property type="term" value="F:transmembrane transporter activity"/>
    <property type="evidence" value="ECO:0000318"/>
    <property type="project" value="GO_Central"/>
</dbReference>
<dbReference type="GO" id="GO:0055085">
    <property type="term" value="P:transmembrane transport"/>
    <property type="evidence" value="ECO:0000318"/>
    <property type="project" value="GO_Central"/>
</dbReference>
<dbReference type="CDD" id="cd03255">
    <property type="entry name" value="ABC_MJ0796_LolCDE_FtsE"/>
    <property type="match status" value="1"/>
</dbReference>
<dbReference type="FunFam" id="3.40.50.300:FF:000032">
    <property type="entry name" value="Export ABC transporter ATP-binding protein"/>
    <property type="match status" value="1"/>
</dbReference>
<dbReference type="Gene3D" id="3.40.50.300">
    <property type="entry name" value="P-loop containing nucleotide triphosphate hydrolases"/>
    <property type="match status" value="1"/>
</dbReference>
<dbReference type="InterPro" id="IPR003593">
    <property type="entry name" value="AAA+_ATPase"/>
</dbReference>
<dbReference type="InterPro" id="IPR003439">
    <property type="entry name" value="ABC_transporter-like_ATP-bd"/>
</dbReference>
<dbReference type="InterPro" id="IPR017871">
    <property type="entry name" value="ABC_transporter-like_CS"/>
</dbReference>
<dbReference type="InterPro" id="IPR015854">
    <property type="entry name" value="ABC_transpr_LolD-like"/>
</dbReference>
<dbReference type="InterPro" id="IPR017911">
    <property type="entry name" value="MacB-like_ATP-bd"/>
</dbReference>
<dbReference type="InterPro" id="IPR027417">
    <property type="entry name" value="P-loop_NTPase"/>
</dbReference>
<dbReference type="PANTHER" id="PTHR24220:SF685">
    <property type="entry name" value="ABC TRANSPORTER RELATED"/>
    <property type="match status" value="1"/>
</dbReference>
<dbReference type="PANTHER" id="PTHR24220">
    <property type="entry name" value="IMPORT ATP-BINDING PROTEIN"/>
    <property type="match status" value="1"/>
</dbReference>
<dbReference type="Pfam" id="PF00005">
    <property type="entry name" value="ABC_tran"/>
    <property type="match status" value="1"/>
</dbReference>
<dbReference type="SMART" id="SM00382">
    <property type="entry name" value="AAA"/>
    <property type="match status" value="1"/>
</dbReference>
<dbReference type="SUPFAM" id="SSF52540">
    <property type="entry name" value="P-loop containing nucleoside triphosphate hydrolases"/>
    <property type="match status" value="1"/>
</dbReference>
<dbReference type="PROSITE" id="PS00211">
    <property type="entry name" value="ABC_TRANSPORTER_1"/>
    <property type="match status" value="1"/>
</dbReference>
<dbReference type="PROSITE" id="PS50893">
    <property type="entry name" value="ABC_TRANSPORTER_2"/>
    <property type="match status" value="1"/>
</dbReference>
<proteinExistence type="evidence at protein level"/>
<reference key="1">
    <citation type="journal article" date="1998" name="Nature">
        <title>Deciphering the biology of Mycobacterium tuberculosis from the complete genome sequence.</title>
        <authorList>
            <person name="Cole S.T."/>
            <person name="Brosch R."/>
            <person name="Parkhill J."/>
            <person name="Garnier T."/>
            <person name="Churcher C.M."/>
            <person name="Harris D.E."/>
            <person name="Gordon S.V."/>
            <person name="Eiglmeier K."/>
            <person name="Gas S."/>
            <person name="Barry C.E. III"/>
            <person name="Tekaia F."/>
            <person name="Badcock K."/>
            <person name="Basham D."/>
            <person name="Brown D."/>
            <person name="Chillingworth T."/>
            <person name="Connor R."/>
            <person name="Davies R.M."/>
            <person name="Devlin K."/>
            <person name="Feltwell T."/>
            <person name="Gentles S."/>
            <person name="Hamlin N."/>
            <person name="Holroyd S."/>
            <person name="Hornsby T."/>
            <person name="Jagels K."/>
            <person name="Krogh A."/>
            <person name="McLean J."/>
            <person name="Moule S."/>
            <person name="Murphy L.D."/>
            <person name="Oliver S."/>
            <person name="Osborne J."/>
            <person name="Quail M.A."/>
            <person name="Rajandream M.A."/>
            <person name="Rogers J."/>
            <person name="Rutter S."/>
            <person name="Seeger K."/>
            <person name="Skelton S."/>
            <person name="Squares S."/>
            <person name="Squares R."/>
            <person name="Sulston J.E."/>
            <person name="Taylor K."/>
            <person name="Whitehead S."/>
            <person name="Barrell B.G."/>
        </authorList>
    </citation>
    <scope>NUCLEOTIDE SEQUENCE [LARGE SCALE GENOMIC DNA]</scope>
    <source>
        <strain>ATCC 25618 / H37Rv</strain>
    </source>
</reference>
<reference key="2">
    <citation type="journal article" date="2006" name="J. Infect. Dis.">
        <title>Mycobacterium tuberculosis invasion and traversal across an in vitro human blood-brain barrier as a pathogenic mechanism for central nervous system tuberculosis.</title>
        <authorList>
            <person name="Jain S.K."/>
            <person name="Paul-Satyaseela M."/>
            <person name="Lamichhane G."/>
            <person name="Kim K.S."/>
            <person name="Bishai W.R."/>
        </authorList>
    </citation>
    <scope>INDUCTION</scope>
    <source>
        <strain>ATCC 25618 / H37Rv</strain>
    </source>
</reference>
<reference key="3">
    <citation type="journal article" date="2007" name="Infect. Immun.">
        <title>Signature-tagged transposon mutagenesis identifies novel Mycobacterium tuberculosis genes involved in the parasitism of human macrophages.</title>
        <authorList>
            <person name="Rosas-Magallanes V."/>
            <person name="Stadthagen-Gomez G."/>
            <person name="Rauzier J."/>
            <person name="Barreiro L.B."/>
            <person name="Tailleux L."/>
            <person name="Boudou F."/>
            <person name="Griffin R."/>
            <person name="Nigou J."/>
            <person name="Jackson M."/>
            <person name="Gicquel B."/>
            <person name="Neyrolles O."/>
        </authorList>
    </citation>
    <scope>FUNCTION</scope>
    <scope>DISRUPTION PHENOTYPE</scope>
    <source>
        <strain>MT103</strain>
    </source>
</reference>
<reference key="4">
    <citation type="journal article" date="2011" name="Mol. Cell. Proteomics">
        <title>Proteogenomic analysis of Mycobacterium tuberculosis by high resolution mass spectrometry.</title>
        <authorList>
            <person name="Kelkar D.S."/>
            <person name="Kumar D."/>
            <person name="Kumar P."/>
            <person name="Balakrishnan L."/>
            <person name="Muthusamy B."/>
            <person name="Yadav A.K."/>
            <person name="Shrivastava P."/>
            <person name="Marimuthu A."/>
            <person name="Anand S."/>
            <person name="Sundaram H."/>
            <person name="Kingsbury R."/>
            <person name="Harsha H.C."/>
            <person name="Nair B."/>
            <person name="Prasad T.S."/>
            <person name="Chauhan D.S."/>
            <person name="Katoch K."/>
            <person name="Katoch V.M."/>
            <person name="Kumar P."/>
            <person name="Chaerkady R."/>
            <person name="Ramachandran S."/>
            <person name="Dash D."/>
            <person name="Pandey A."/>
        </authorList>
    </citation>
    <scope>IDENTIFICATION BY MASS SPECTROMETRY [LARGE SCALE ANALYSIS]</scope>
    <source>
        <strain>ATCC 25618 / H37Rv</strain>
    </source>
</reference>
<protein>
    <recommendedName>
        <fullName evidence="4">Uncharacterized ABC transporter ATP-binding protein Rv0986</fullName>
    </recommendedName>
</protein>
<evidence type="ECO:0000255" key="1">
    <source>
        <dbReference type="PROSITE-ProRule" id="PRU00434"/>
    </source>
</evidence>
<evidence type="ECO:0000269" key="2">
    <source>
    </source>
</evidence>
<evidence type="ECO:0000269" key="3">
    <source>
    </source>
</evidence>
<evidence type="ECO:0000305" key="4"/>
<organism>
    <name type="scientific">Mycobacterium tuberculosis (strain ATCC 25618 / H37Rv)</name>
    <dbReference type="NCBI Taxonomy" id="83332"/>
    <lineage>
        <taxon>Bacteria</taxon>
        <taxon>Bacillati</taxon>
        <taxon>Actinomycetota</taxon>
        <taxon>Actinomycetes</taxon>
        <taxon>Mycobacteriales</taxon>
        <taxon>Mycobacteriaceae</taxon>
        <taxon>Mycobacterium</taxon>
        <taxon>Mycobacterium tuberculosis complex</taxon>
    </lineage>
</organism>
<name>Y986_MYCTU</name>
<keyword id="KW-0067">ATP-binding</keyword>
<keyword id="KW-0547">Nucleotide-binding</keyword>
<keyword id="KW-1185">Reference proteome</keyword>
<keyword id="KW-0813">Transport</keyword>